<feature type="chain" id="PRO_0000136370" description="Phosphoribosyl-ATP pyrophosphatase">
    <location>
        <begin position="1"/>
        <end position="93"/>
    </location>
</feature>
<protein>
    <recommendedName>
        <fullName evidence="1">Phosphoribosyl-ATP pyrophosphatase</fullName>
        <shortName evidence="1">PRA-PH</shortName>
        <ecNumber evidence="1">3.6.1.31</ecNumber>
    </recommendedName>
</protein>
<evidence type="ECO:0000255" key="1">
    <source>
        <dbReference type="HAMAP-Rule" id="MF_01020"/>
    </source>
</evidence>
<dbReference type="EC" id="3.6.1.31" evidence="1"/>
<dbReference type="EMBL" id="AE016958">
    <property type="protein sequence ID" value="AAS04164.1"/>
    <property type="molecule type" value="Genomic_DNA"/>
</dbReference>
<dbReference type="RefSeq" id="WP_010949376.1">
    <property type="nucleotide sequence ID" value="NZ_CP106873.1"/>
</dbReference>
<dbReference type="SMR" id="P60537"/>
<dbReference type="STRING" id="262316.MAP_1847c"/>
<dbReference type="KEGG" id="mpa:MAP_1847c"/>
<dbReference type="PATRIC" id="fig|262316.17.peg.1957"/>
<dbReference type="eggNOG" id="COG0140">
    <property type="taxonomic scope" value="Bacteria"/>
</dbReference>
<dbReference type="HOGENOM" id="CLU_123337_2_1_11"/>
<dbReference type="UniPathway" id="UPA00031">
    <property type="reaction ID" value="UER00007"/>
</dbReference>
<dbReference type="Proteomes" id="UP000000580">
    <property type="component" value="Chromosome"/>
</dbReference>
<dbReference type="GO" id="GO:0005737">
    <property type="term" value="C:cytoplasm"/>
    <property type="evidence" value="ECO:0007669"/>
    <property type="project" value="UniProtKB-SubCell"/>
</dbReference>
<dbReference type="GO" id="GO:0005524">
    <property type="term" value="F:ATP binding"/>
    <property type="evidence" value="ECO:0007669"/>
    <property type="project" value="UniProtKB-KW"/>
</dbReference>
<dbReference type="GO" id="GO:0004636">
    <property type="term" value="F:phosphoribosyl-ATP diphosphatase activity"/>
    <property type="evidence" value="ECO:0007669"/>
    <property type="project" value="UniProtKB-UniRule"/>
</dbReference>
<dbReference type="GO" id="GO:0000105">
    <property type="term" value="P:L-histidine biosynthetic process"/>
    <property type="evidence" value="ECO:0007669"/>
    <property type="project" value="UniProtKB-UniRule"/>
</dbReference>
<dbReference type="CDD" id="cd11547">
    <property type="entry name" value="NTP-PPase_HisE"/>
    <property type="match status" value="1"/>
</dbReference>
<dbReference type="FunFam" id="1.10.287.1080:FF:000005">
    <property type="entry name" value="Phosphoribosyl-ATP pyrophosphatase"/>
    <property type="match status" value="1"/>
</dbReference>
<dbReference type="Gene3D" id="1.10.287.1080">
    <property type="entry name" value="MazG-like"/>
    <property type="match status" value="1"/>
</dbReference>
<dbReference type="HAMAP" id="MF_01020">
    <property type="entry name" value="HisE"/>
    <property type="match status" value="1"/>
</dbReference>
<dbReference type="InterPro" id="IPR008179">
    <property type="entry name" value="HisE"/>
</dbReference>
<dbReference type="InterPro" id="IPR021130">
    <property type="entry name" value="PRib-ATP_PPHydrolase-like"/>
</dbReference>
<dbReference type="NCBIfam" id="TIGR03188">
    <property type="entry name" value="histidine_hisI"/>
    <property type="match status" value="1"/>
</dbReference>
<dbReference type="NCBIfam" id="NF001610">
    <property type="entry name" value="PRK00400.1-1"/>
    <property type="match status" value="1"/>
</dbReference>
<dbReference type="PANTHER" id="PTHR42945">
    <property type="entry name" value="HISTIDINE BIOSYNTHESIS BIFUNCTIONAL PROTEIN"/>
    <property type="match status" value="1"/>
</dbReference>
<dbReference type="PANTHER" id="PTHR42945:SF1">
    <property type="entry name" value="HISTIDINE BIOSYNTHESIS BIFUNCTIONAL PROTEIN HIS7"/>
    <property type="match status" value="1"/>
</dbReference>
<dbReference type="Pfam" id="PF01503">
    <property type="entry name" value="PRA-PH"/>
    <property type="match status" value="1"/>
</dbReference>
<dbReference type="SUPFAM" id="SSF101386">
    <property type="entry name" value="all-alpha NTP pyrophosphatases"/>
    <property type="match status" value="1"/>
</dbReference>
<gene>
    <name evidence="1" type="primary">hisE</name>
    <name type="synonym">hisI</name>
    <name type="ordered locus">MAP_1847c</name>
</gene>
<proteinExistence type="inferred from homology"/>
<keyword id="KW-0028">Amino-acid biosynthesis</keyword>
<keyword id="KW-0067">ATP-binding</keyword>
<keyword id="KW-0963">Cytoplasm</keyword>
<keyword id="KW-0368">Histidine biosynthesis</keyword>
<keyword id="KW-0378">Hydrolase</keyword>
<keyword id="KW-0547">Nucleotide-binding</keyword>
<keyword id="KW-1185">Reference proteome</keyword>
<name>HIS2_MYCPA</name>
<reference key="1">
    <citation type="journal article" date="2005" name="Proc. Natl. Acad. Sci. U.S.A.">
        <title>The complete genome sequence of Mycobacterium avium subspecies paratuberculosis.</title>
        <authorList>
            <person name="Li L."/>
            <person name="Bannantine J.P."/>
            <person name="Zhang Q."/>
            <person name="Amonsin A."/>
            <person name="May B.J."/>
            <person name="Alt D."/>
            <person name="Banerji N."/>
            <person name="Kanjilal S."/>
            <person name="Kapur V."/>
        </authorList>
    </citation>
    <scope>NUCLEOTIDE SEQUENCE [LARGE SCALE GENOMIC DNA]</scope>
    <source>
        <strain>ATCC BAA-968 / K-10</strain>
    </source>
</reference>
<organism>
    <name type="scientific">Mycolicibacterium paratuberculosis (strain ATCC BAA-968 / K-10)</name>
    <name type="common">Mycobacterium paratuberculosis</name>
    <dbReference type="NCBI Taxonomy" id="262316"/>
    <lineage>
        <taxon>Bacteria</taxon>
        <taxon>Bacillati</taxon>
        <taxon>Actinomycetota</taxon>
        <taxon>Actinomycetes</taxon>
        <taxon>Mycobacteriales</taxon>
        <taxon>Mycobacteriaceae</taxon>
        <taxon>Mycobacterium</taxon>
        <taxon>Mycobacterium avium complex (MAC)</taxon>
    </lineage>
</organism>
<accession>P60537</accession>
<sequence length="93" mass="10087">MKQSLAVKTFEDLFAELGERARTRPAGSATVAALDGGVHGLGKKILEEAGEVWLAAEHESDDALAGEISQLLYWTQVLMTARGLSLDDVYRKL</sequence>
<comment type="catalytic activity">
    <reaction evidence="1">
        <text>1-(5-phospho-beta-D-ribosyl)-ATP + H2O = 1-(5-phospho-beta-D-ribosyl)-5'-AMP + diphosphate + H(+)</text>
        <dbReference type="Rhea" id="RHEA:22828"/>
        <dbReference type="ChEBI" id="CHEBI:15377"/>
        <dbReference type="ChEBI" id="CHEBI:15378"/>
        <dbReference type="ChEBI" id="CHEBI:33019"/>
        <dbReference type="ChEBI" id="CHEBI:59457"/>
        <dbReference type="ChEBI" id="CHEBI:73183"/>
        <dbReference type="EC" id="3.6.1.31"/>
    </reaction>
</comment>
<comment type="pathway">
    <text evidence="1">Amino-acid biosynthesis; L-histidine biosynthesis; L-histidine from 5-phospho-alpha-D-ribose 1-diphosphate: step 2/9.</text>
</comment>
<comment type="subcellular location">
    <subcellularLocation>
        <location evidence="1">Cytoplasm</location>
    </subcellularLocation>
</comment>
<comment type="similarity">
    <text evidence="1">Belongs to the PRA-PH family.</text>
</comment>